<sequence>MRTSLQAVALWGQKAPPHSITAIMITDDQRTIVTGSQEGQLCLWNLSHELKISAKELLFGHSASVTCLARARDFSKQPYIVSAAENGEMCVWNVTNGQCMEKATLPYRHTAICYYHCSFRMTGEGWLLCCGEYQDVLIIDAKTLAVVHSFRSSQFPDWINCMCIVHSMRIQEDSLLVVSVAGELKVWDLSSSINSIQEKQDVYEKESKFLESLNCQTIRFCTYTERLLLVVFSKCWKVYDYCDFSLLLTEVSRNGQFFAGGEVIAAHRILIWTEDGHSYIYQLLNSGLSKSIYPADGRVLKETIYPHLLCSTSVQENKEQSRPFVMGYMNERKEPFYKVLFSGEVSGRITLWHIPDVPVSKFDGSPREIPVTATWTLQDNFDKHDTMSQSIIDYFSGLKDGAGTAVVTSSEYIPSLDKLICGCEDGTIIITQALNAAKARLLEGGSLVKDSPPHKVLKGHHQSVTSLLYPHGLSSKLDQSWMLSGDLDSCVILWDIFTEEILHKFFLEAGPVTSLLMSPEKFKLRGEQIICCVCGDHSVALLHLEGKSCLLHARKHLFPVRMIKWHPVENFLIVGCADDSVYIWEIETGTLERHETGERARIILNCCDDSQLVKSVLPIASETLKHKSIEQRSSSPYQLGPLPCPGLQVESSCKVTDAKFCPRPFNVLPVKTKWSNVGFHILLFDLENLVELLLPTPLSDVDSSSSFYGGEVLRRAKSTVEKKTLTLRKSKTACGPLSAEALAKPITESLAQGDNTIKFSEENDGIKRQKKMKISKKMQPKPSRKVDASLTIDTAKLFLSCLLPWGVDKDLDYLCIKHLNILKLQGPISLGISLNEDNFSLMLPGWDLCNSGMIKDYSGVNLFSRKVLDLSDKYTATLPNQVGIPRGLENNCDSLRESDTIVYLLSRLFLVNKLVNMPLELACRVGSSFRMESIHNKMRGAGNDILNMSSFYSCLRNGKNESHVPEADLSLLKLISCWRDQSVQVTEAIQAVLLAEVQQHMKSLGKIPVNSQPVSMAENGNCEMKQMLPKLEWTEELELQCVRNTLPLQTPVSPVKHDSNSNSANFQDVEDMPDRCALEESESPGEPRHHSWIAKVCPCKVS</sequence>
<keyword id="KW-0986">Amelogenesis imperfecta</keyword>
<keyword id="KW-0091">Biomineralization</keyword>
<keyword id="KW-0968">Cytoplasmic vesicle</keyword>
<keyword id="KW-0597">Phosphoprotein</keyword>
<keyword id="KW-1267">Proteomics identification</keyword>
<keyword id="KW-1185">Reference proteome</keyword>
<keyword id="KW-0677">Repeat</keyword>
<keyword id="KW-0853">WD repeat</keyword>
<evidence type="ECO:0000250" key="1">
    <source>
        <dbReference type="UniProtKB" id="D3YYM4"/>
    </source>
</evidence>
<evidence type="ECO:0000269" key="2">
    <source>
    </source>
</evidence>
<evidence type="ECO:0000269" key="3">
    <source>
    </source>
</evidence>
<evidence type="ECO:0000269" key="4">
    <source>
    </source>
</evidence>
<evidence type="ECO:0000269" key="5">
    <source>
    </source>
</evidence>
<evidence type="ECO:0000269" key="6">
    <source>
    </source>
</evidence>
<evidence type="ECO:0000305" key="7"/>
<protein>
    <recommendedName>
        <fullName>WD repeat-containing protein 72</fullName>
    </recommendedName>
</protein>
<reference key="1">
    <citation type="journal article" date="2007" name="BMC Genomics">
        <title>The full-ORF clone resource of the German cDNA consortium.</title>
        <authorList>
            <person name="Bechtel S."/>
            <person name="Rosenfelder H."/>
            <person name="Duda A."/>
            <person name="Schmidt C.P."/>
            <person name="Ernst U."/>
            <person name="Wellenreuther R."/>
            <person name="Mehrle A."/>
            <person name="Schuster C."/>
            <person name="Bahr A."/>
            <person name="Bloecker H."/>
            <person name="Heubner D."/>
            <person name="Hoerlein A."/>
            <person name="Michel G."/>
            <person name="Wedler H."/>
            <person name="Koehrer K."/>
            <person name="Ottenwaelder B."/>
            <person name="Poustka A."/>
            <person name="Wiemann S."/>
            <person name="Schupp I."/>
        </authorList>
    </citation>
    <scope>NUCLEOTIDE SEQUENCE [LARGE SCALE MRNA]</scope>
    <scope>VARIANT VAL-100</scope>
    <source>
        <tissue>Fetal kidney</tissue>
    </source>
</reference>
<reference key="2">
    <citation type="journal article" date="2006" name="Nature">
        <title>Analysis of the DNA sequence and duplication history of human chromosome 15.</title>
        <authorList>
            <person name="Zody M.C."/>
            <person name="Garber M."/>
            <person name="Sharpe T."/>
            <person name="Young S.K."/>
            <person name="Rowen L."/>
            <person name="O'Neill K."/>
            <person name="Whittaker C.A."/>
            <person name="Kamal M."/>
            <person name="Chang J.L."/>
            <person name="Cuomo C.A."/>
            <person name="Dewar K."/>
            <person name="FitzGerald M.G."/>
            <person name="Kodira C.D."/>
            <person name="Madan A."/>
            <person name="Qin S."/>
            <person name="Yang X."/>
            <person name="Abbasi N."/>
            <person name="Abouelleil A."/>
            <person name="Arachchi H.M."/>
            <person name="Baradarani L."/>
            <person name="Birditt B."/>
            <person name="Bloom S."/>
            <person name="Bloom T."/>
            <person name="Borowsky M.L."/>
            <person name="Burke J."/>
            <person name="Butler J."/>
            <person name="Cook A."/>
            <person name="DeArellano K."/>
            <person name="DeCaprio D."/>
            <person name="Dorris L. III"/>
            <person name="Dors M."/>
            <person name="Eichler E.E."/>
            <person name="Engels R."/>
            <person name="Fahey J."/>
            <person name="Fleetwood P."/>
            <person name="Friedman C."/>
            <person name="Gearin G."/>
            <person name="Hall J.L."/>
            <person name="Hensley G."/>
            <person name="Johnson E."/>
            <person name="Jones C."/>
            <person name="Kamat A."/>
            <person name="Kaur A."/>
            <person name="Locke D.P."/>
            <person name="Madan A."/>
            <person name="Munson G."/>
            <person name="Jaffe D.B."/>
            <person name="Lui A."/>
            <person name="Macdonald P."/>
            <person name="Mauceli E."/>
            <person name="Naylor J.W."/>
            <person name="Nesbitt R."/>
            <person name="Nicol R."/>
            <person name="O'Leary S.B."/>
            <person name="Ratcliffe A."/>
            <person name="Rounsley S."/>
            <person name="She X."/>
            <person name="Sneddon K.M.B."/>
            <person name="Stewart S."/>
            <person name="Sougnez C."/>
            <person name="Stone S.M."/>
            <person name="Topham K."/>
            <person name="Vincent D."/>
            <person name="Wang S."/>
            <person name="Zimmer A.R."/>
            <person name="Birren B.W."/>
            <person name="Hood L."/>
            <person name="Lander E.S."/>
            <person name="Nusbaum C."/>
        </authorList>
    </citation>
    <scope>NUCLEOTIDE SEQUENCE [LARGE SCALE GENOMIC DNA]</scope>
</reference>
<reference key="3">
    <citation type="journal article" date="2004" name="Genome Res.">
        <title>The status, quality, and expansion of the NIH full-length cDNA project: the Mammalian Gene Collection (MGC).</title>
        <authorList>
            <consortium name="The MGC Project Team"/>
        </authorList>
    </citation>
    <scope>NUCLEOTIDE SEQUENCE [LARGE SCALE MRNA]</scope>
    <scope>VARIANT VAL-100</scope>
    <source>
        <tissue>Heart</tissue>
        <tissue>Lung</tissue>
    </source>
</reference>
<reference key="4">
    <citation type="journal article" date="2004" name="Nat. Genet.">
        <title>Complete sequencing and characterization of 21,243 full-length human cDNAs.</title>
        <authorList>
            <person name="Ota T."/>
            <person name="Suzuki Y."/>
            <person name="Nishikawa T."/>
            <person name="Otsuki T."/>
            <person name="Sugiyama T."/>
            <person name="Irie R."/>
            <person name="Wakamatsu A."/>
            <person name="Hayashi K."/>
            <person name="Sato H."/>
            <person name="Nagai K."/>
            <person name="Kimura K."/>
            <person name="Makita H."/>
            <person name="Sekine M."/>
            <person name="Obayashi M."/>
            <person name="Nishi T."/>
            <person name="Shibahara T."/>
            <person name="Tanaka T."/>
            <person name="Ishii S."/>
            <person name="Yamamoto J."/>
            <person name="Saito K."/>
            <person name="Kawai Y."/>
            <person name="Isono Y."/>
            <person name="Nakamura Y."/>
            <person name="Nagahari K."/>
            <person name="Murakami K."/>
            <person name="Yasuda T."/>
            <person name="Iwayanagi T."/>
            <person name="Wagatsuma M."/>
            <person name="Shiratori A."/>
            <person name="Sudo H."/>
            <person name="Hosoiri T."/>
            <person name="Kaku Y."/>
            <person name="Kodaira H."/>
            <person name="Kondo H."/>
            <person name="Sugawara M."/>
            <person name="Takahashi M."/>
            <person name="Kanda K."/>
            <person name="Yokoi T."/>
            <person name="Furuya T."/>
            <person name="Kikkawa E."/>
            <person name="Omura Y."/>
            <person name="Abe K."/>
            <person name="Kamihara K."/>
            <person name="Katsuta N."/>
            <person name="Sato K."/>
            <person name="Tanikawa M."/>
            <person name="Yamazaki M."/>
            <person name="Ninomiya K."/>
            <person name="Ishibashi T."/>
            <person name="Yamashita H."/>
            <person name="Murakawa K."/>
            <person name="Fujimori K."/>
            <person name="Tanai H."/>
            <person name="Kimata M."/>
            <person name="Watanabe M."/>
            <person name="Hiraoka S."/>
            <person name="Chiba Y."/>
            <person name="Ishida S."/>
            <person name="Ono Y."/>
            <person name="Takiguchi S."/>
            <person name="Watanabe S."/>
            <person name="Yosida M."/>
            <person name="Hotuta T."/>
            <person name="Kusano J."/>
            <person name="Kanehori K."/>
            <person name="Takahashi-Fujii A."/>
            <person name="Hara H."/>
            <person name="Tanase T.-O."/>
            <person name="Nomura Y."/>
            <person name="Togiya S."/>
            <person name="Komai F."/>
            <person name="Hara R."/>
            <person name="Takeuchi K."/>
            <person name="Arita M."/>
            <person name="Imose N."/>
            <person name="Musashino K."/>
            <person name="Yuuki H."/>
            <person name="Oshima A."/>
            <person name="Sasaki N."/>
            <person name="Aotsuka S."/>
            <person name="Yoshikawa Y."/>
            <person name="Matsunawa H."/>
            <person name="Ichihara T."/>
            <person name="Shiohata N."/>
            <person name="Sano S."/>
            <person name="Moriya S."/>
            <person name="Momiyama H."/>
            <person name="Satoh N."/>
            <person name="Takami S."/>
            <person name="Terashima Y."/>
            <person name="Suzuki O."/>
            <person name="Nakagawa S."/>
            <person name="Senoh A."/>
            <person name="Mizoguchi H."/>
            <person name="Goto Y."/>
            <person name="Shimizu F."/>
            <person name="Wakebe H."/>
            <person name="Hishigaki H."/>
            <person name="Watanabe T."/>
            <person name="Sugiyama A."/>
            <person name="Takemoto M."/>
            <person name="Kawakami B."/>
            <person name="Yamazaki M."/>
            <person name="Watanabe K."/>
            <person name="Kumagai A."/>
            <person name="Itakura S."/>
            <person name="Fukuzumi Y."/>
            <person name="Fujimori Y."/>
            <person name="Komiyama M."/>
            <person name="Tashiro H."/>
            <person name="Tanigami A."/>
            <person name="Fujiwara T."/>
            <person name="Ono T."/>
            <person name="Yamada K."/>
            <person name="Fujii Y."/>
            <person name="Ozaki K."/>
            <person name="Hirao M."/>
            <person name="Ohmori Y."/>
            <person name="Kawabata A."/>
            <person name="Hikiji T."/>
            <person name="Kobatake N."/>
            <person name="Inagaki H."/>
            <person name="Ikema Y."/>
            <person name="Okamoto S."/>
            <person name="Okitani R."/>
            <person name="Kawakami T."/>
            <person name="Noguchi S."/>
            <person name="Itoh T."/>
            <person name="Shigeta K."/>
            <person name="Senba T."/>
            <person name="Matsumura K."/>
            <person name="Nakajima Y."/>
            <person name="Mizuno T."/>
            <person name="Morinaga M."/>
            <person name="Sasaki M."/>
            <person name="Togashi T."/>
            <person name="Oyama M."/>
            <person name="Hata H."/>
            <person name="Watanabe M."/>
            <person name="Komatsu T."/>
            <person name="Mizushima-Sugano J."/>
            <person name="Satoh T."/>
            <person name="Shirai Y."/>
            <person name="Takahashi Y."/>
            <person name="Nakagawa K."/>
            <person name="Okumura K."/>
            <person name="Nagase T."/>
            <person name="Nomura N."/>
            <person name="Kikuchi H."/>
            <person name="Masuho Y."/>
            <person name="Yamashita R."/>
            <person name="Nakai K."/>
            <person name="Yada T."/>
            <person name="Nakamura Y."/>
            <person name="Ohara O."/>
            <person name="Isogai T."/>
            <person name="Sugano S."/>
        </authorList>
    </citation>
    <scope>NUCLEOTIDE SEQUENCE [LARGE SCALE MRNA] OF 1-775</scope>
    <scope>VARIANT VAL-100</scope>
    <source>
        <tissue>Kidney</tissue>
    </source>
</reference>
<reference key="5">
    <citation type="journal article" date="2009" name="Am. J. Hum. Genet.">
        <title>Mutations in the beta propeller WDR72 cause autosomal-recessive hypomaturation amelogenesis imperfecta.</title>
        <authorList>
            <person name="El-Sayed W."/>
            <person name="Parry D.A."/>
            <person name="Shore R.C."/>
            <person name="Ahmed M."/>
            <person name="Jafri H."/>
            <person name="Rashid Y."/>
            <person name="Al-Bahlani S."/>
            <person name="Al Harasi S."/>
            <person name="Kirkham J."/>
            <person name="Inglehearn C.F."/>
            <person name="Mighell A.J."/>
        </authorList>
    </citation>
    <scope>INVOLVEMENT IN AI2A3</scope>
    <scope>FUNCTION</scope>
</reference>
<reference key="6">
    <citation type="journal article" date="2014" name="Matrix Biol.">
        <title>WDR72 models of structure and function: a stage-specific regulator of enamel mineralization.</title>
        <authorList>
            <person name="Katsura K.A."/>
            <person name="Horst J.A."/>
            <person name="Chandra D."/>
            <person name="Le T.Q."/>
            <person name="Nakano Y."/>
            <person name="Zhang Y."/>
            <person name="Horst O.V."/>
            <person name="Zhu L."/>
            <person name="Le M.H."/>
            <person name="DenBesten P.K."/>
        </authorList>
    </citation>
    <scope>INVOLVEMENT IN AI2A3</scope>
    <scope>FUNCTION</scope>
</reference>
<organism>
    <name type="scientific">Homo sapiens</name>
    <name type="common">Human</name>
    <dbReference type="NCBI Taxonomy" id="9606"/>
    <lineage>
        <taxon>Eukaryota</taxon>
        <taxon>Metazoa</taxon>
        <taxon>Chordata</taxon>
        <taxon>Craniata</taxon>
        <taxon>Vertebrata</taxon>
        <taxon>Euteleostomi</taxon>
        <taxon>Mammalia</taxon>
        <taxon>Eutheria</taxon>
        <taxon>Euarchontoglires</taxon>
        <taxon>Primates</taxon>
        <taxon>Haplorrhini</taxon>
        <taxon>Catarrhini</taxon>
        <taxon>Hominidae</taxon>
        <taxon>Homo</taxon>
    </lineage>
</organism>
<accession>Q3MJ13</accession>
<accession>Q7Z3I3</accession>
<accession>Q8N8X2</accession>
<gene>
    <name type="primary">WDR72</name>
</gene>
<dbReference type="EMBL" id="BX537884">
    <property type="protein sequence ID" value="CAD97880.1"/>
    <property type="molecule type" value="mRNA"/>
</dbReference>
<dbReference type="EMBL" id="AC024061">
    <property type="status" value="NOT_ANNOTATED_CDS"/>
    <property type="molecule type" value="Genomic_DNA"/>
</dbReference>
<dbReference type="EMBL" id="AC066611">
    <property type="status" value="NOT_ANNOTATED_CDS"/>
    <property type="molecule type" value="Genomic_DNA"/>
</dbReference>
<dbReference type="EMBL" id="AC066614">
    <property type="status" value="NOT_ANNOTATED_CDS"/>
    <property type="molecule type" value="Genomic_DNA"/>
</dbReference>
<dbReference type="EMBL" id="BC101616">
    <property type="protein sequence ID" value="AAI01617.1"/>
    <property type="molecule type" value="mRNA"/>
</dbReference>
<dbReference type="EMBL" id="BC101614">
    <property type="protein sequence ID" value="AAI01615.1"/>
    <property type="molecule type" value="mRNA"/>
</dbReference>
<dbReference type="EMBL" id="AK096055">
    <property type="protein sequence ID" value="BAC04689.1"/>
    <property type="molecule type" value="mRNA"/>
</dbReference>
<dbReference type="CCDS" id="CCDS10151.1"/>
<dbReference type="RefSeq" id="NP_877435.3">
    <property type="nucleotide sequence ID" value="NM_182758.4"/>
</dbReference>
<dbReference type="RefSeq" id="XP_011519735.1">
    <property type="nucleotide sequence ID" value="XM_011521433.2"/>
</dbReference>
<dbReference type="RefSeq" id="XP_011519737.1">
    <property type="nucleotide sequence ID" value="XM_011521435.2"/>
</dbReference>
<dbReference type="RefSeq" id="XP_016877550.1">
    <property type="nucleotide sequence ID" value="XM_017022061.2"/>
</dbReference>
<dbReference type="RefSeq" id="XP_047288298.1">
    <property type="nucleotide sequence ID" value="XM_047432342.1"/>
</dbReference>
<dbReference type="RefSeq" id="XP_047288299.1">
    <property type="nucleotide sequence ID" value="XM_047432343.1"/>
</dbReference>
<dbReference type="RefSeq" id="XP_047288300.1">
    <property type="nucleotide sequence ID" value="XM_047432344.1"/>
</dbReference>
<dbReference type="BioGRID" id="129179">
    <property type="interactions" value="32"/>
</dbReference>
<dbReference type="FunCoup" id="Q3MJ13">
    <property type="interactions" value="268"/>
</dbReference>
<dbReference type="IntAct" id="Q3MJ13">
    <property type="interactions" value="7"/>
</dbReference>
<dbReference type="STRING" id="9606.ENSP00000379619"/>
<dbReference type="GlyGen" id="Q3MJ13">
    <property type="glycosylation" value="3 sites, 1 O-linked glycan (3 sites)"/>
</dbReference>
<dbReference type="iPTMnet" id="Q3MJ13"/>
<dbReference type="PhosphoSitePlus" id="Q3MJ13"/>
<dbReference type="BioMuta" id="WDR72"/>
<dbReference type="DMDM" id="296453027"/>
<dbReference type="jPOST" id="Q3MJ13"/>
<dbReference type="MassIVE" id="Q3MJ13"/>
<dbReference type="PaxDb" id="9606-ENSP00000379619"/>
<dbReference type="PeptideAtlas" id="Q3MJ13"/>
<dbReference type="ProteomicsDB" id="61800"/>
<dbReference type="Antibodypedia" id="68374">
    <property type="antibodies" value="13 antibodies from 5 providers"/>
</dbReference>
<dbReference type="DNASU" id="256764"/>
<dbReference type="Ensembl" id="ENST00000360509.10">
    <property type="protein sequence ID" value="ENSP00000353699.5"/>
    <property type="gene ID" value="ENSG00000166415.15"/>
</dbReference>
<dbReference type="Ensembl" id="ENST00000396328.5">
    <property type="protein sequence ID" value="ENSP00000379619.1"/>
    <property type="gene ID" value="ENSG00000166415.15"/>
</dbReference>
<dbReference type="GeneID" id="256764"/>
<dbReference type="KEGG" id="hsa:256764"/>
<dbReference type="MANE-Select" id="ENST00000360509.10">
    <property type="protein sequence ID" value="ENSP00000353699.5"/>
    <property type="RefSeq nucleotide sequence ID" value="NM_182758.4"/>
    <property type="RefSeq protein sequence ID" value="NP_877435.3"/>
</dbReference>
<dbReference type="UCSC" id="uc002acj.3">
    <property type="organism name" value="human"/>
</dbReference>
<dbReference type="AGR" id="HGNC:26790"/>
<dbReference type="CTD" id="256764"/>
<dbReference type="DisGeNET" id="256764"/>
<dbReference type="GeneCards" id="WDR72"/>
<dbReference type="HGNC" id="HGNC:26790">
    <property type="gene designation" value="WDR72"/>
</dbReference>
<dbReference type="HPA" id="ENSG00000166415">
    <property type="expression patterns" value="Tissue enhanced (kidney, liver, thyroid gland)"/>
</dbReference>
<dbReference type="MalaCards" id="WDR72"/>
<dbReference type="MIM" id="613211">
    <property type="type" value="phenotype"/>
</dbReference>
<dbReference type="MIM" id="613214">
    <property type="type" value="gene"/>
</dbReference>
<dbReference type="neXtProt" id="NX_Q3MJ13"/>
<dbReference type="OpenTargets" id="ENSG00000166415"/>
<dbReference type="Orphanet" id="402041">
    <property type="disease" value="Autosomal recessive distal renal tubular acidosis"/>
</dbReference>
<dbReference type="Orphanet" id="100033">
    <property type="disease" value="Hypomaturation amelogenesis imperfecta"/>
</dbReference>
<dbReference type="PharmGKB" id="PA142670587"/>
<dbReference type="VEuPathDB" id="HostDB:ENSG00000166415"/>
<dbReference type="eggNOG" id="KOG4155">
    <property type="taxonomic scope" value="Eukaryota"/>
</dbReference>
<dbReference type="GeneTree" id="ENSGT00940000160298"/>
<dbReference type="InParanoid" id="Q3MJ13"/>
<dbReference type="OrthoDB" id="338622at2759"/>
<dbReference type="PAN-GO" id="Q3MJ13">
    <property type="GO annotations" value="2 GO annotations based on evolutionary models"/>
</dbReference>
<dbReference type="PhylomeDB" id="Q3MJ13"/>
<dbReference type="TreeFam" id="TF313196"/>
<dbReference type="PathwayCommons" id="Q3MJ13"/>
<dbReference type="SignaLink" id="Q3MJ13"/>
<dbReference type="BioGRID-ORCS" id="256764">
    <property type="hits" value="9 hits in 1154 CRISPR screens"/>
</dbReference>
<dbReference type="ChiTaRS" id="WDR72">
    <property type="organism name" value="human"/>
</dbReference>
<dbReference type="GeneWiki" id="WDR72"/>
<dbReference type="GenomeRNAi" id="256764"/>
<dbReference type="Pharos" id="Q3MJ13">
    <property type="development level" value="Tbio"/>
</dbReference>
<dbReference type="PRO" id="PR:Q3MJ13"/>
<dbReference type="Proteomes" id="UP000005640">
    <property type="component" value="Chromosome 15"/>
</dbReference>
<dbReference type="RNAct" id="Q3MJ13">
    <property type="molecule type" value="protein"/>
</dbReference>
<dbReference type="Bgee" id="ENSG00000166415">
    <property type="expression patterns" value="Expressed in kidney epithelium and 109 other cell types or tissues"/>
</dbReference>
<dbReference type="ExpressionAtlas" id="Q3MJ13">
    <property type="expression patterns" value="baseline and differential"/>
</dbReference>
<dbReference type="GO" id="GO:0005737">
    <property type="term" value="C:cytoplasm"/>
    <property type="evidence" value="ECO:0000314"/>
    <property type="project" value="CACAO"/>
</dbReference>
<dbReference type="GO" id="GO:0031410">
    <property type="term" value="C:cytoplasmic vesicle"/>
    <property type="evidence" value="ECO:0007669"/>
    <property type="project" value="UniProtKB-KW"/>
</dbReference>
<dbReference type="GO" id="GO:0031214">
    <property type="term" value="P:biomineral tissue development"/>
    <property type="evidence" value="ECO:0007669"/>
    <property type="project" value="UniProtKB-KW"/>
</dbReference>
<dbReference type="GO" id="GO:0072659">
    <property type="term" value="P:protein localization to plasma membrane"/>
    <property type="evidence" value="ECO:0000318"/>
    <property type="project" value="GO_Central"/>
</dbReference>
<dbReference type="FunFam" id="2.130.10.10:FF:000247">
    <property type="entry name" value="WD repeat-containing protein 72"/>
    <property type="match status" value="1"/>
</dbReference>
<dbReference type="FunFam" id="2.130.10.10:FF:000686">
    <property type="entry name" value="WD repeat-containing protein 72"/>
    <property type="match status" value="1"/>
</dbReference>
<dbReference type="Gene3D" id="2.130.10.10">
    <property type="entry name" value="YVTN repeat-like/Quinoprotein amine dehydrogenase"/>
    <property type="match status" value="2"/>
</dbReference>
<dbReference type="InterPro" id="IPR015943">
    <property type="entry name" value="WD40/YVTN_repeat-like_dom_sf"/>
</dbReference>
<dbReference type="InterPro" id="IPR019775">
    <property type="entry name" value="WD40_repeat_CS"/>
</dbReference>
<dbReference type="InterPro" id="IPR036322">
    <property type="entry name" value="WD40_repeat_dom_sf"/>
</dbReference>
<dbReference type="InterPro" id="IPR001680">
    <property type="entry name" value="WD40_rpt"/>
</dbReference>
<dbReference type="InterPro" id="IPR049916">
    <property type="entry name" value="WDR7/72"/>
</dbReference>
<dbReference type="PANTHER" id="PTHR44099">
    <property type="entry name" value="RABCONNECTIN-3B, ISOFORM A"/>
    <property type="match status" value="1"/>
</dbReference>
<dbReference type="PANTHER" id="PTHR44099:SF2">
    <property type="entry name" value="WD REPEAT-CONTAINING PROTEIN 72"/>
    <property type="match status" value="1"/>
</dbReference>
<dbReference type="Pfam" id="PF00400">
    <property type="entry name" value="WD40"/>
    <property type="match status" value="3"/>
</dbReference>
<dbReference type="Pfam" id="PF23123">
    <property type="entry name" value="WDR72_alpha-sol"/>
    <property type="match status" value="1"/>
</dbReference>
<dbReference type="SMART" id="SM00320">
    <property type="entry name" value="WD40"/>
    <property type="match status" value="7"/>
</dbReference>
<dbReference type="SUPFAM" id="SSF50978">
    <property type="entry name" value="WD40 repeat-like"/>
    <property type="match status" value="2"/>
</dbReference>
<dbReference type="PROSITE" id="PS00678">
    <property type="entry name" value="WD_REPEATS_1"/>
    <property type="match status" value="2"/>
</dbReference>
<dbReference type="PROSITE" id="PS50082">
    <property type="entry name" value="WD_REPEATS_2"/>
    <property type="match status" value="2"/>
</dbReference>
<dbReference type="PROSITE" id="PS50294">
    <property type="entry name" value="WD_REPEATS_REGION"/>
    <property type="match status" value="2"/>
</dbReference>
<name>WDR72_HUMAN</name>
<comment type="function">
    <text evidence="1 5 6">Plays a major role in formation of tooth enamel (PubMed:19853237, PubMed:25008349). Specifically required during the maturation phase of amelogenesis for normal formation of the enamel matrix and clearance of enamel proteins. May be involved in localization of the calcium transporter SLC24A4 to the ameloblast cell membrane.</text>
</comment>
<comment type="subcellular location">
    <subcellularLocation>
        <location evidence="1">Cytoplasmic vesicle</location>
    </subcellularLocation>
</comment>
<comment type="disease" evidence="5 6">
    <disease id="DI-02570">
        <name>Amelogenesis imperfecta, hypomaturation type, 2A3</name>
        <acronym>AI2A3</acronym>
        <description>A defect of enamel formation. The disorder involves both primary and secondary dentitions. The teeth have a shiny agar jelly appearance and the enamel is softer than normal. Brown pigment is present in middle layers of enamel.</description>
        <dbReference type="MIM" id="613211"/>
    </disease>
    <text>The disease is caused by variants affecting the gene represented in this entry.</text>
</comment>
<proteinExistence type="evidence at protein level"/>
<feature type="chain" id="PRO_0000241447" description="WD repeat-containing protein 72">
    <location>
        <begin position="1"/>
        <end position="1102"/>
    </location>
</feature>
<feature type="repeat" description="WD 1">
    <location>
        <begin position="15"/>
        <end position="54"/>
    </location>
</feature>
<feature type="repeat" description="WD 2">
    <location>
        <begin position="60"/>
        <end position="102"/>
    </location>
</feature>
<feature type="repeat" description="WD 3">
    <location>
        <begin position="160"/>
        <end position="197"/>
    </location>
</feature>
<feature type="repeat" description="WD 4">
    <location>
        <begin position="318"/>
        <end position="362"/>
    </location>
</feature>
<feature type="repeat" description="WD 5">
    <location>
        <begin position="402"/>
        <end position="441"/>
    </location>
</feature>
<feature type="repeat" description="WD 6">
    <location>
        <begin position="459"/>
        <end position="504"/>
    </location>
</feature>
<feature type="repeat" description="WD 7">
    <location>
        <begin position="507"/>
        <end position="552"/>
    </location>
</feature>
<feature type="repeat" description="WD 8">
    <location>
        <begin position="555"/>
        <end position="594"/>
    </location>
</feature>
<feature type="modified residue" description="Phosphoserine" evidence="1">
    <location>
        <position position="1081"/>
    </location>
</feature>
<feature type="modified residue" description="Phosphoserine" evidence="1">
    <location>
        <position position="1083"/>
    </location>
</feature>
<feature type="sequence variant" id="VAR_060045" description="In dbSNP:rs690346." evidence="2 3 4">
    <original>M</original>
    <variation>V</variation>
    <location>
        <position position="100"/>
    </location>
</feature>
<feature type="sequence variant" id="VAR_057633" description="In dbSNP:rs35258188.">
    <original>K</original>
    <variation>Q</variation>
    <location>
        <position position="399"/>
    </location>
</feature>
<feature type="sequence variant" id="VAR_057634" description="In dbSNP:rs34123953.">
    <original>Q</original>
    <variation>H</variation>
    <location>
        <position position="479"/>
    </location>
</feature>
<feature type="sequence variant" id="VAR_062106" description="In dbSNP:rs60404950.">
    <original>K</original>
    <variation>E</variation>
    <location>
        <position position="781"/>
    </location>
</feature>
<feature type="sequence variant" id="VAR_026837" description="In dbSNP:rs17730281.">
    <original>L</original>
    <variation>F</variation>
    <location>
        <position position="819"/>
    </location>
</feature>
<feature type="sequence variant" id="VAR_026838" description="In dbSNP:rs16966320.">
    <original>S</original>
    <variation>A</variation>
    <location>
        <position position="833"/>
    </location>
</feature>
<feature type="sequence conflict" description="In Ref. 1; CAD97880." evidence="7" ref="1">
    <original>L</original>
    <variation>P</variation>
    <location>
        <position position="41"/>
    </location>
</feature>
<feature type="sequence conflict" description="In Ref. 1; CAD97880." evidence="7" ref="1">
    <original>E</original>
    <variation>G</variation>
    <location>
        <position position="183"/>
    </location>
</feature>
<feature type="sequence conflict" description="In Ref. 1; CAD97880 and 3; AAI01617/AAI01615." evidence="7" ref="1 3">
    <original>P</original>
    <variation>L</variation>
    <location>
        <position position="306"/>
    </location>
</feature>
<feature type="sequence conflict" description="In Ref. 1; CAD97880." evidence="7" ref="1">
    <original>S</original>
    <variation>P</variation>
    <location>
        <position position="610"/>
    </location>
</feature>